<comment type="function">
    <text evidence="1">Catalyzes the reversible interconversion of serine and glycine with tetrahydrofolate (THF) serving as the one-carbon carrier. This reaction serves as the major source of one-carbon groups required for the biosynthesis of purines, thymidylate, methionine, and other important biomolecules. Also exhibits THF-independent aldolase activity toward beta-hydroxyamino acids, producing glycine and aldehydes, via a retro-aldol mechanism.</text>
</comment>
<comment type="catalytic activity">
    <reaction evidence="1">
        <text>(6R)-5,10-methylene-5,6,7,8-tetrahydrofolate + glycine + H2O = (6S)-5,6,7,8-tetrahydrofolate + L-serine</text>
        <dbReference type="Rhea" id="RHEA:15481"/>
        <dbReference type="ChEBI" id="CHEBI:15377"/>
        <dbReference type="ChEBI" id="CHEBI:15636"/>
        <dbReference type="ChEBI" id="CHEBI:33384"/>
        <dbReference type="ChEBI" id="CHEBI:57305"/>
        <dbReference type="ChEBI" id="CHEBI:57453"/>
        <dbReference type="EC" id="2.1.2.1"/>
    </reaction>
</comment>
<comment type="cofactor">
    <cofactor evidence="1">
        <name>pyridoxal 5'-phosphate</name>
        <dbReference type="ChEBI" id="CHEBI:597326"/>
    </cofactor>
</comment>
<comment type="pathway">
    <text evidence="1">One-carbon metabolism; tetrahydrofolate interconversion.</text>
</comment>
<comment type="pathway">
    <text evidence="1">Amino-acid biosynthesis; glycine biosynthesis; glycine from L-serine: step 1/1.</text>
</comment>
<comment type="subunit">
    <text evidence="1">Homodimer.</text>
</comment>
<comment type="subcellular location">
    <subcellularLocation>
        <location evidence="1">Cytoplasm</location>
    </subcellularLocation>
</comment>
<comment type="similarity">
    <text evidence="1">Belongs to the SHMT family.</text>
</comment>
<reference key="1">
    <citation type="submission" date="2004-12" db="EMBL/GenBank/DDBJ databases">
        <title>The genome sequence of Borrelia hermsii and Borrelia turicatae: comparative analysis of two agents of endemic N. America relapsing fever.</title>
        <authorList>
            <person name="Porcella S.F."/>
            <person name="Raffel S.J."/>
            <person name="Schrumpf M.E."/>
            <person name="Montgomery B."/>
            <person name="Smith T."/>
            <person name="Schwan T.G."/>
        </authorList>
    </citation>
    <scope>NUCLEOTIDE SEQUENCE [LARGE SCALE GENOMIC DNA]</scope>
    <source>
        <strain>91E135</strain>
    </source>
</reference>
<sequence>MIDSILFDLIEREAKRERENIELIASENFVSLGVRQAVGSILTNKYAEGYPSKRYYGGCFVVDDIENLAISRAKELFGASYANVQPHSGSQANMAAIMALIKPGDKILGMELSHGGHLTHGSKVSFSGMLFDAYSYGVSRDSEIIDYDDVRRIARECRPNLIIAGASSYSREIDFKKFREIADEVSAYLLCDIAHTAGLVVTGFHNSPIDVAHLTTSTTHKTLRGPRGGLILAGKESSMIVNFNNKERTLENAVNSCVFPGTQGGPLMHVIAGKAVAFGEALMDEFKDYISSVIENTKAMAEYFVSEGFRIVSGGTDNHLFLVDLGILGITGADAEKVLESVNIILNKNIIPFDSKNPSVASGIRIGGAAITSRGLNRDDSIEVARFIIRALKTKSDYELKKIKCEVVEFISSFNMP</sequence>
<feature type="chain" id="PRO_1000195433" description="Serine hydroxymethyltransferase">
    <location>
        <begin position="1"/>
        <end position="417"/>
    </location>
</feature>
<feature type="binding site" evidence="1">
    <location>
        <position position="112"/>
    </location>
    <ligand>
        <name>(6S)-5,6,7,8-tetrahydrofolate</name>
        <dbReference type="ChEBI" id="CHEBI:57453"/>
    </ligand>
</feature>
<feature type="binding site" evidence="1">
    <location>
        <begin position="116"/>
        <end position="118"/>
    </location>
    <ligand>
        <name>(6S)-5,6,7,8-tetrahydrofolate</name>
        <dbReference type="ChEBI" id="CHEBI:57453"/>
    </ligand>
</feature>
<feature type="binding site" evidence="1">
    <location>
        <position position="247"/>
    </location>
    <ligand>
        <name>(6S)-5,6,7,8-tetrahydrofolate</name>
        <dbReference type="ChEBI" id="CHEBI:57453"/>
    </ligand>
</feature>
<feature type="site" description="Plays an important role in substrate specificity" evidence="1">
    <location>
        <position position="220"/>
    </location>
</feature>
<feature type="modified residue" description="N6-(pyridoxal phosphate)lysine" evidence="1">
    <location>
        <position position="221"/>
    </location>
</feature>
<gene>
    <name evidence="1" type="primary">glyA</name>
    <name type="ordered locus">BT0601</name>
</gene>
<dbReference type="EC" id="2.1.2.1" evidence="1"/>
<dbReference type="EMBL" id="CP000049">
    <property type="protein sequence ID" value="AAX17924.1"/>
    <property type="molecule type" value="Genomic_DNA"/>
</dbReference>
<dbReference type="RefSeq" id="WP_011772542.1">
    <property type="nucleotide sequence ID" value="NC_008710.1"/>
</dbReference>
<dbReference type="SMR" id="A1R032"/>
<dbReference type="KEGG" id="btu:BT0601"/>
<dbReference type="eggNOG" id="COG0112">
    <property type="taxonomic scope" value="Bacteria"/>
</dbReference>
<dbReference type="HOGENOM" id="CLU_022477_2_1_12"/>
<dbReference type="UniPathway" id="UPA00193"/>
<dbReference type="UniPathway" id="UPA00288">
    <property type="reaction ID" value="UER01023"/>
</dbReference>
<dbReference type="Proteomes" id="UP000001205">
    <property type="component" value="Chromosome"/>
</dbReference>
<dbReference type="GO" id="GO:0005829">
    <property type="term" value="C:cytosol"/>
    <property type="evidence" value="ECO:0007669"/>
    <property type="project" value="TreeGrafter"/>
</dbReference>
<dbReference type="GO" id="GO:0004372">
    <property type="term" value="F:glycine hydroxymethyltransferase activity"/>
    <property type="evidence" value="ECO:0007669"/>
    <property type="project" value="UniProtKB-UniRule"/>
</dbReference>
<dbReference type="GO" id="GO:0030170">
    <property type="term" value="F:pyridoxal phosphate binding"/>
    <property type="evidence" value="ECO:0007669"/>
    <property type="project" value="UniProtKB-UniRule"/>
</dbReference>
<dbReference type="GO" id="GO:0019264">
    <property type="term" value="P:glycine biosynthetic process from serine"/>
    <property type="evidence" value="ECO:0007669"/>
    <property type="project" value="UniProtKB-UniRule"/>
</dbReference>
<dbReference type="GO" id="GO:0035999">
    <property type="term" value="P:tetrahydrofolate interconversion"/>
    <property type="evidence" value="ECO:0007669"/>
    <property type="project" value="UniProtKB-UniRule"/>
</dbReference>
<dbReference type="CDD" id="cd00378">
    <property type="entry name" value="SHMT"/>
    <property type="match status" value="1"/>
</dbReference>
<dbReference type="FunFam" id="3.40.640.10:FF:000001">
    <property type="entry name" value="Serine hydroxymethyltransferase"/>
    <property type="match status" value="1"/>
</dbReference>
<dbReference type="Gene3D" id="3.90.1150.10">
    <property type="entry name" value="Aspartate Aminotransferase, domain 1"/>
    <property type="match status" value="1"/>
</dbReference>
<dbReference type="Gene3D" id="3.40.640.10">
    <property type="entry name" value="Type I PLP-dependent aspartate aminotransferase-like (Major domain)"/>
    <property type="match status" value="1"/>
</dbReference>
<dbReference type="HAMAP" id="MF_00051">
    <property type="entry name" value="SHMT"/>
    <property type="match status" value="1"/>
</dbReference>
<dbReference type="InterPro" id="IPR015424">
    <property type="entry name" value="PyrdxlP-dep_Trfase"/>
</dbReference>
<dbReference type="InterPro" id="IPR015421">
    <property type="entry name" value="PyrdxlP-dep_Trfase_major"/>
</dbReference>
<dbReference type="InterPro" id="IPR015422">
    <property type="entry name" value="PyrdxlP-dep_Trfase_small"/>
</dbReference>
<dbReference type="InterPro" id="IPR001085">
    <property type="entry name" value="Ser_HO-MeTrfase"/>
</dbReference>
<dbReference type="InterPro" id="IPR049943">
    <property type="entry name" value="Ser_HO-MeTrfase-like"/>
</dbReference>
<dbReference type="InterPro" id="IPR019798">
    <property type="entry name" value="Ser_HO-MeTrfase_PLP_BS"/>
</dbReference>
<dbReference type="InterPro" id="IPR039429">
    <property type="entry name" value="SHMT-like_dom"/>
</dbReference>
<dbReference type="NCBIfam" id="NF000586">
    <property type="entry name" value="PRK00011.1"/>
    <property type="match status" value="1"/>
</dbReference>
<dbReference type="PANTHER" id="PTHR11680">
    <property type="entry name" value="SERINE HYDROXYMETHYLTRANSFERASE"/>
    <property type="match status" value="1"/>
</dbReference>
<dbReference type="PANTHER" id="PTHR11680:SF35">
    <property type="entry name" value="SERINE HYDROXYMETHYLTRANSFERASE 1"/>
    <property type="match status" value="1"/>
</dbReference>
<dbReference type="Pfam" id="PF00464">
    <property type="entry name" value="SHMT"/>
    <property type="match status" value="1"/>
</dbReference>
<dbReference type="PIRSF" id="PIRSF000412">
    <property type="entry name" value="SHMT"/>
    <property type="match status" value="1"/>
</dbReference>
<dbReference type="SUPFAM" id="SSF53383">
    <property type="entry name" value="PLP-dependent transferases"/>
    <property type="match status" value="1"/>
</dbReference>
<dbReference type="PROSITE" id="PS00096">
    <property type="entry name" value="SHMT"/>
    <property type="match status" value="1"/>
</dbReference>
<organism>
    <name type="scientific">Borrelia turicatae (strain 91E135)</name>
    <dbReference type="NCBI Taxonomy" id="314724"/>
    <lineage>
        <taxon>Bacteria</taxon>
        <taxon>Pseudomonadati</taxon>
        <taxon>Spirochaetota</taxon>
        <taxon>Spirochaetia</taxon>
        <taxon>Spirochaetales</taxon>
        <taxon>Borreliaceae</taxon>
        <taxon>Borrelia</taxon>
    </lineage>
</organism>
<accession>A1R032</accession>
<evidence type="ECO:0000255" key="1">
    <source>
        <dbReference type="HAMAP-Rule" id="MF_00051"/>
    </source>
</evidence>
<proteinExistence type="inferred from homology"/>
<name>GLYA_BORT9</name>
<protein>
    <recommendedName>
        <fullName evidence="1">Serine hydroxymethyltransferase</fullName>
        <shortName evidence="1">SHMT</shortName>
        <shortName evidence="1">Serine methylase</shortName>
        <ecNumber evidence="1">2.1.2.1</ecNumber>
    </recommendedName>
</protein>
<keyword id="KW-0028">Amino-acid biosynthesis</keyword>
<keyword id="KW-0963">Cytoplasm</keyword>
<keyword id="KW-0554">One-carbon metabolism</keyword>
<keyword id="KW-0663">Pyridoxal phosphate</keyword>
<keyword id="KW-1185">Reference proteome</keyword>
<keyword id="KW-0808">Transferase</keyword>